<protein>
    <recommendedName>
        <fullName evidence="2">Ascorbate-specific PTS system EIIB component</fullName>
        <ecNumber evidence="2">2.7.1.194</ecNumber>
    </recommendedName>
    <alternativeName>
        <fullName evidence="2">Ascorbate-specific phosphotransferase enzyme IIB component</fullName>
    </alternativeName>
</protein>
<gene>
    <name type="primary">ulaB</name>
    <name type="ordered locus">SCH_4258</name>
</gene>
<proteinExistence type="inferred from homology"/>
<evidence type="ECO:0000250" key="1">
    <source>
        <dbReference type="UniProtKB" id="P00550"/>
    </source>
</evidence>
<evidence type="ECO:0000250" key="2">
    <source>
        <dbReference type="UniProtKB" id="P69822"/>
    </source>
</evidence>
<evidence type="ECO:0000255" key="3">
    <source>
        <dbReference type="PROSITE-ProRule" id="PRU00422"/>
    </source>
</evidence>
<evidence type="ECO:0000305" key="4"/>
<sequence>MTVRILAVCGNGQGSSMIMKMKVDQFLTQSNIDHTVNSCAVGEYKSELSGADIIIASTHIAGEISVTGNKYVVGVRNMLSPADFGPKLLEVIKEHFPQDVK</sequence>
<name>ULAB_SALCH</name>
<feature type="chain" id="PRO_0000230323" description="Ascorbate-specific PTS system EIIB component">
    <location>
        <begin position="1"/>
        <end position="101"/>
    </location>
</feature>
<feature type="domain" description="PTS EIIB type-2" evidence="3">
    <location>
        <begin position="3"/>
        <end position="96"/>
    </location>
</feature>
<feature type="active site" description="Phosphocysteine intermediate" evidence="1 4">
    <location>
        <position position="9"/>
    </location>
</feature>
<feature type="modified residue" description="Phosphocysteine" evidence="1 4">
    <location>
        <position position="9"/>
    </location>
</feature>
<comment type="function">
    <text evidence="2">The phosphoenolpyruvate-dependent sugar phosphotransferase system (sugar PTS), a major carbohydrate active transport system, catalyzes the phosphorylation of incoming sugar substrates concomitantly with their translocation across the cell membrane. The enzyme II UlaABC PTS system is involved in ascorbate transport.</text>
</comment>
<comment type="catalytic activity">
    <reaction evidence="2">
        <text>N(pros)-phospho-L-histidyl-[protein] + L-ascorbate(out) = L-ascorbate 6-phosphate(in) + L-histidyl-[protein]</text>
        <dbReference type="Rhea" id="RHEA:42436"/>
        <dbReference type="Rhea" id="RHEA-COMP:9745"/>
        <dbReference type="Rhea" id="RHEA-COMP:9746"/>
        <dbReference type="ChEBI" id="CHEBI:29979"/>
        <dbReference type="ChEBI" id="CHEBI:38290"/>
        <dbReference type="ChEBI" id="CHEBI:61698"/>
        <dbReference type="ChEBI" id="CHEBI:64837"/>
        <dbReference type="EC" id="2.7.1.194"/>
    </reaction>
</comment>
<comment type="subcellular location">
    <subcellularLocation>
        <location evidence="4">Cytoplasm</location>
    </subcellularLocation>
</comment>
<comment type="induction">
    <text evidence="2">Induced by L-ascorbate. Repressed by UlaR.</text>
</comment>
<comment type="domain">
    <text evidence="3">The PTS EIIB type-2 domain is phosphorylated by phospho-EIIA on a cysteinyl residue. Then, it transfers the phosphoryl group to the sugar substrate concomitantly with the sugar uptake processed by the PTS EIIC type-2 domain.</text>
</comment>
<dbReference type="EC" id="2.7.1.194" evidence="2"/>
<dbReference type="EMBL" id="AE017220">
    <property type="protein sequence ID" value="AAX68164.1"/>
    <property type="molecule type" value="Genomic_DNA"/>
</dbReference>
<dbReference type="RefSeq" id="WP_000218358.1">
    <property type="nucleotide sequence ID" value="NC_006905.1"/>
</dbReference>
<dbReference type="SMR" id="Q57GJ8"/>
<dbReference type="KEGG" id="sec:SCH_4258"/>
<dbReference type="HOGENOM" id="CLU_159248_0_0_6"/>
<dbReference type="Proteomes" id="UP000000538">
    <property type="component" value="Chromosome"/>
</dbReference>
<dbReference type="GO" id="GO:0005737">
    <property type="term" value="C:cytoplasm"/>
    <property type="evidence" value="ECO:0007669"/>
    <property type="project" value="UniProtKB-SubCell"/>
</dbReference>
<dbReference type="GO" id="GO:0016301">
    <property type="term" value="F:kinase activity"/>
    <property type="evidence" value="ECO:0007669"/>
    <property type="project" value="UniProtKB-KW"/>
</dbReference>
<dbReference type="GO" id="GO:0008982">
    <property type="term" value="F:protein-N(PI)-phosphohistidine-sugar phosphotransferase activity"/>
    <property type="evidence" value="ECO:0007669"/>
    <property type="project" value="InterPro"/>
</dbReference>
<dbReference type="GO" id="GO:0009401">
    <property type="term" value="P:phosphoenolpyruvate-dependent sugar phosphotransferase system"/>
    <property type="evidence" value="ECO:0007669"/>
    <property type="project" value="UniProtKB-KW"/>
</dbReference>
<dbReference type="CDD" id="cd05563">
    <property type="entry name" value="PTS_IIB_ascorbate"/>
    <property type="match status" value="1"/>
</dbReference>
<dbReference type="FunFam" id="3.40.50.2300:FF:000030">
    <property type="entry name" value="PTS system, ascorbate-specific, IIB component"/>
    <property type="match status" value="1"/>
</dbReference>
<dbReference type="Gene3D" id="3.40.50.2300">
    <property type="match status" value="1"/>
</dbReference>
<dbReference type="InterPro" id="IPR036095">
    <property type="entry name" value="PTS_EIIB-like_sf"/>
</dbReference>
<dbReference type="InterPro" id="IPR013011">
    <property type="entry name" value="PTS_EIIB_2"/>
</dbReference>
<dbReference type="InterPro" id="IPR003501">
    <property type="entry name" value="PTS_EIIB_2/3"/>
</dbReference>
<dbReference type="NCBIfam" id="NF007586">
    <property type="entry name" value="PRK10222.1"/>
    <property type="match status" value="1"/>
</dbReference>
<dbReference type="Pfam" id="PF02302">
    <property type="entry name" value="PTS_IIB"/>
    <property type="match status" value="1"/>
</dbReference>
<dbReference type="SUPFAM" id="SSF52794">
    <property type="entry name" value="PTS system IIB component-like"/>
    <property type="match status" value="1"/>
</dbReference>
<dbReference type="PROSITE" id="PS51099">
    <property type="entry name" value="PTS_EIIB_TYPE_2"/>
    <property type="match status" value="1"/>
</dbReference>
<organism>
    <name type="scientific">Salmonella choleraesuis (strain SC-B67)</name>
    <dbReference type="NCBI Taxonomy" id="321314"/>
    <lineage>
        <taxon>Bacteria</taxon>
        <taxon>Pseudomonadati</taxon>
        <taxon>Pseudomonadota</taxon>
        <taxon>Gammaproteobacteria</taxon>
        <taxon>Enterobacterales</taxon>
        <taxon>Enterobacteriaceae</taxon>
        <taxon>Salmonella</taxon>
    </lineage>
</organism>
<reference key="1">
    <citation type="journal article" date="2005" name="Nucleic Acids Res.">
        <title>The genome sequence of Salmonella enterica serovar Choleraesuis, a highly invasive and resistant zoonotic pathogen.</title>
        <authorList>
            <person name="Chiu C.-H."/>
            <person name="Tang P."/>
            <person name="Chu C."/>
            <person name="Hu S."/>
            <person name="Bao Q."/>
            <person name="Yu J."/>
            <person name="Chou Y.-Y."/>
            <person name="Wang H.-S."/>
            <person name="Lee Y.-S."/>
        </authorList>
    </citation>
    <scope>NUCLEOTIDE SEQUENCE [LARGE SCALE GENOMIC DNA]</scope>
    <source>
        <strain>SC-B67</strain>
    </source>
</reference>
<accession>Q57GJ8</accession>
<keyword id="KW-0963">Cytoplasm</keyword>
<keyword id="KW-0418">Kinase</keyword>
<keyword id="KW-0597">Phosphoprotein</keyword>
<keyword id="KW-0598">Phosphotransferase system</keyword>
<keyword id="KW-0808">Transferase</keyword>
<keyword id="KW-0813">Transport</keyword>